<reference key="1">
    <citation type="journal article" date="1988" name="Virology">
        <title>Influenza B virus evolution: co-circulating lineages and comparison of evolutionary pattern with those of influenza A and C viruses.</title>
        <authorList>
            <person name="Yamashita M."/>
            <person name="Krystal M."/>
            <person name="Fitch W.M."/>
            <person name="Palese P."/>
        </authorList>
    </citation>
    <scope>NUCLEOTIDE SEQUENCE [GENOMIC RNA]</scope>
</reference>
<sequence>IVLLMVVTSNADRICTGITSSNSPHVVKTATQGEVNVTGVIPLTTTPTKSHFANLKGTQTRGKLCPNCLNCTDLDVALGRPKCMGTIPSAKASILHEVKPVTSGCFPIMHDRTKIRQLPNLLRGYENIRLSARNVINAETAPGGPYIVGTSGSCPNVTNGKGFFATMAWAVPKNKNKTARNPLTVEVPYICTKGEDQITVWGFHSDNEIQMVTLYGDSKPQKFTSSANGVTTHYVSQIGGFPNQTEDEGLQQSGRIVVDYMVQKPGKTGTIVYQRGVLLPQKVWCASGRSKVIKGSLPLIGEADCLHEKYGGLNKSKPYYTGEHAKAIGNCPIWVKTPLKLANGTKYRPPAKLLKERGFFGAIAG</sequence>
<feature type="signal peptide">
    <location>
        <begin position="1" status="less than"/>
        <end position="11"/>
    </location>
</feature>
<feature type="chain" id="PRO_0000039129" description="Hemagglutinin HA1 chain">
    <location>
        <begin position="12"/>
        <end position="356"/>
    </location>
</feature>
<feature type="chain" id="PRO_0000039130" description="Hemagglutinin HA2 chain">
    <location>
        <begin position="358"/>
        <end position="365" status="greater than"/>
    </location>
</feature>
<feature type="glycosylation site" description="N-linked (GlcNAc...) asparagine; by host" evidence="2">
    <location>
        <position position="36"/>
    </location>
</feature>
<feature type="glycosylation site" description="N-linked (GlcNAc...) asparagine; by host" evidence="2">
    <location>
        <position position="70"/>
    </location>
</feature>
<feature type="glycosylation site" description="N-linked (GlcNAc...) asparagine; by host" evidence="2">
    <location>
        <position position="156"/>
    </location>
</feature>
<feature type="glycosylation site" description="N-linked (GlcNAc...) asparagine; by host" evidence="2">
    <location>
        <position position="176"/>
    </location>
</feature>
<feature type="glycosylation site" description="N-linked (GlcNAc...) asparagine; by host" evidence="2">
    <location>
        <position position="243"/>
    </location>
</feature>
<feature type="glycosylation site" description="N-linked (GlcNAc...) asparagine; by host" evidence="2">
    <location>
        <position position="314"/>
    </location>
</feature>
<feature type="glycosylation site" description="N-linked (GlcNAc...) asparagine; by host" evidence="2">
    <location>
        <position position="343"/>
    </location>
</feature>
<feature type="non-terminal residue">
    <location>
        <position position="1"/>
    </location>
</feature>
<feature type="non-terminal residue">
    <location>
        <position position="365"/>
    </location>
</feature>
<protein>
    <recommendedName>
        <fullName>Hemagglutinin</fullName>
    </recommendedName>
    <component>
        <recommendedName>
            <fullName>Hemagglutinin HA1 chain</fullName>
        </recommendedName>
    </component>
    <component>
        <recommendedName>
            <fullName>Hemagglutinin HA2 chain</fullName>
        </recommendedName>
    </component>
</protein>
<organismHost>
    <name type="scientific">Homo sapiens</name>
    <name type="common">Human</name>
    <dbReference type="NCBI Taxonomy" id="9606"/>
</organismHost>
<keyword id="KW-1015">Disulfide bond</keyword>
<keyword id="KW-1170">Fusion of virus membrane with host endosomal membrane</keyword>
<keyword id="KW-1168">Fusion of virus membrane with host membrane</keyword>
<keyword id="KW-0325">Glycoprotein</keyword>
<keyword id="KW-0348">Hemagglutinin</keyword>
<keyword id="KW-1032">Host cell membrane</keyword>
<keyword id="KW-1043">Host membrane</keyword>
<keyword id="KW-0945">Host-virus interaction</keyword>
<keyword id="KW-0449">Lipoprotein</keyword>
<keyword id="KW-0472">Membrane</keyword>
<keyword id="KW-0564">Palmitate</keyword>
<keyword id="KW-0732">Signal</keyword>
<keyword id="KW-0812">Transmembrane</keyword>
<keyword id="KW-1161">Viral attachment to host cell</keyword>
<keyword id="KW-0261">Viral envelope protein</keyword>
<keyword id="KW-1162">Viral penetration into host cytoplasm</keyword>
<keyword id="KW-0946">Virion</keyword>
<keyword id="KW-1160">Virus entry into host cell</keyword>
<gene>
    <name type="primary">HA</name>
</gene>
<accession>P12443</accession>
<organism>
    <name type="scientific">Influenza B virus (strain B/Singapore/1964)</name>
    <dbReference type="NCBI Taxonomy" id="11545"/>
    <lineage>
        <taxon>Viruses</taxon>
        <taxon>Riboviria</taxon>
        <taxon>Orthornavirae</taxon>
        <taxon>Negarnaviricota</taxon>
        <taxon>Polyploviricotina</taxon>
        <taxon>Insthoviricetes</taxon>
        <taxon>Articulavirales</taxon>
        <taxon>Orthomyxoviridae</taxon>
        <taxon>Betainfluenzavirus</taxon>
        <taxon>Betainfluenzavirus influenzae</taxon>
        <taxon>Influenza B virus</taxon>
    </lineage>
</organism>
<dbReference type="EMBL" id="M22946">
    <property type="protein sequence ID" value="AAA43773.1"/>
    <property type="molecule type" value="Genomic_RNA"/>
</dbReference>
<dbReference type="SMR" id="P12443"/>
<dbReference type="GlyCosmos" id="P12443">
    <property type="glycosylation" value="7 sites, No reported glycans"/>
</dbReference>
<dbReference type="GO" id="GO:0020002">
    <property type="term" value="C:host cell plasma membrane"/>
    <property type="evidence" value="ECO:0007669"/>
    <property type="project" value="UniProtKB-SubCell"/>
</dbReference>
<dbReference type="GO" id="GO:0016020">
    <property type="term" value="C:membrane"/>
    <property type="evidence" value="ECO:0007669"/>
    <property type="project" value="UniProtKB-KW"/>
</dbReference>
<dbReference type="GO" id="GO:0019031">
    <property type="term" value="C:viral envelope"/>
    <property type="evidence" value="ECO:0007669"/>
    <property type="project" value="UniProtKB-KW"/>
</dbReference>
<dbReference type="GO" id="GO:0055036">
    <property type="term" value="C:virion membrane"/>
    <property type="evidence" value="ECO:0007669"/>
    <property type="project" value="UniProtKB-SubCell"/>
</dbReference>
<dbReference type="GO" id="GO:0046789">
    <property type="term" value="F:host cell surface receptor binding"/>
    <property type="evidence" value="ECO:0007669"/>
    <property type="project" value="InterPro"/>
</dbReference>
<dbReference type="GO" id="GO:0039654">
    <property type="term" value="P:fusion of virus membrane with host endosome membrane"/>
    <property type="evidence" value="ECO:0007669"/>
    <property type="project" value="UniProtKB-KW"/>
</dbReference>
<dbReference type="GO" id="GO:0019064">
    <property type="term" value="P:fusion of virus membrane with host plasma membrane"/>
    <property type="evidence" value="ECO:0007669"/>
    <property type="project" value="InterPro"/>
</dbReference>
<dbReference type="GO" id="GO:0046718">
    <property type="term" value="P:symbiont entry into host cell"/>
    <property type="evidence" value="ECO:0007669"/>
    <property type="project" value="UniProtKB-KW"/>
</dbReference>
<dbReference type="GO" id="GO:0019062">
    <property type="term" value="P:virion attachment to host cell"/>
    <property type="evidence" value="ECO:0007669"/>
    <property type="project" value="UniProtKB-KW"/>
</dbReference>
<dbReference type="Gene3D" id="3.90.209.20">
    <property type="match status" value="1"/>
</dbReference>
<dbReference type="Gene3D" id="2.10.77.10">
    <property type="entry name" value="Hemagglutinin Chain A, Domain 2"/>
    <property type="match status" value="1"/>
</dbReference>
<dbReference type="InterPro" id="IPR008980">
    <property type="entry name" value="Capsid_hemagglutn"/>
</dbReference>
<dbReference type="InterPro" id="IPR013828">
    <property type="entry name" value="Hemagglutn_HA1_a/b_dom_sf"/>
</dbReference>
<dbReference type="InterPro" id="IPR001364">
    <property type="entry name" value="Hemagglutn_influenz_A/B"/>
</dbReference>
<dbReference type="Pfam" id="PF00509">
    <property type="entry name" value="Hemagglutinin"/>
    <property type="match status" value="1"/>
</dbReference>
<dbReference type="SUPFAM" id="SSF49818">
    <property type="entry name" value="Viral protein domain"/>
    <property type="match status" value="1"/>
</dbReference>
<name>HEMA_INBSJ</name>
<evidence type="ECO:0000250" key="1"/>
<evidence type="ECO:0000255" key="2"/>
<evidence type="ECO:0000305" key="3"/>
<proteinExistence type="inferred from homology"/>
<comment type="function">
    <text>Binds to sialic acid-containing receptors on the cell surface, bringing about the attachment of the virus particle to the cell. Plays a major role in the determination of host range restriction and virulence. Class I viral fusion protein. Responsible for penetration of the virus into the cell cytoplasm by mediating the fusion of the membrane of the endocytosed virus particle with the endosomal membrane. Low pH in endosomes induce an irreversible conformational change in HA2, releasing the fusion hydrophobic peptide. Several trimers are required to form a competent fusion pore.</text>
</comment>
<comment type="subunit">
    <text>Homotrimer of disulfide-linked HA1-HA2.</text>
</comment>
<comment type="subcellular location">
    <subcellularLocation>
        <location evidence="3">Virion membrane</location>
        <topology evidence="3">Single-pass type I membrane protein</topology>
    </subcellularLocation>
    <subcellularLocation>
        <location>Host apical cell membrane</location>
        <topology>Single-pass type I membrane protein</topology>
    </subcellularLocation>
    <text>Targeted to the apical plasma membrane in epithelial polarized cells through a signal present in the transmembrane domain. Associated with glycosphingolipid- and cholesterol-enriched detergent-resistant lipid rafts.</text>
</comment>
<comment type="PTM">
    <text evidence="1">In natural infection, inactive HA is matured into HA1 and HA2 outside the cell by one or more trypsin-like, arginine-specific endoprotease secreted by the bronchial epithelial cells. One identified protease that may be involved in this process is secreted in lungs by club cells (By similarity).</text>
</comment>
<comment type="PTM">
    <text evidence="1">Palmitoylated.</text>
</comment>
<comment type="miscellaneous">
    <text>Major glycoprotein, comprises over 80% of the envelope proteins present in virus particle.</text>
</comment>
<comment type="miscellaneous">
    <text>The extent of infection into host organism is determined by HA. Influenza viruses bud from the apical surface of polarized epithelial cells (e.g. bronchial epithelial cells) into lumen of lungs and are therefore usually pneumotropic. The reason is that HA is cleaved by tryptase clara which is restricted to lungs. However, HAs of H5 and H7 pantropic avian viruses subtypes can be cleaved by furin and subtilisin-type enzymes, allowing the virus to grow in other organs than lungs.</text>
</comment>
<comment type="miscellaneous">
    <text>The influenza B genome consist of 8 RNA segments. Genetic variation of hemagglutinin and/or neuraminidase genes results in the emergence of new influenza strains. The mechanism of variation can be the result of point mutations or the result of genetic reassortment between segments of two different strains.</text>
</comment>
<comment type="similarity">
    <text evidence="3">Belongs to the influenza viruses hemagglutinin family.</text>
</comment>